<dbReference type="EMBL" id="CP001074">
    <property type="protein sequence ID" value="ACE89941.1"/>
    <property type="molecule type" value="Genomic_DNA"/>
</dbReference>
<dbReference type="SMR" id="B3PRF8"/>
<dbReference type="KEGG" id="rec:RHECIAT_CH0000956"/>
<dbReference type="eggNOG" id="COG0711">
    <property type="taxonomic scope" value="Bacteria"/>
</dbReference>
<dbReference type="HOGENOM" id="CLU_079215_1_2_5"/>
<dbReference type="Proteomes" id="UP000008817">
    <property type="component" value="Chromosome"/>
</dbReference>
<dbReference type="GO" id="GO:0005886">
    <property type="term" value="C:plasma membrane"/>
    <property type="evidence" value="ECO:0007669"/>
    <property type="project" value="UniProtKB-SubCell"/>
</dbReference>
<dbReference type="GO" id="GO:0045259">
    <property type="term" value="C:proton-transporting ATP synthase complex"/>
    <property type="evidence" value="ECO:0007669"/>
    <property type="project" value="UniProtKB-KW"/>
</dbReference>
<dbReference type="GO" id="GO:0046933">
    <property type="term" value="F:proton-transporting ATP synthase activity, rotational mechanism"/>
    <property type="evidence" value="ECO:0007669"/>
    <property type="project" value="UniProtKB-UniRule"/>
</dbReference>
<dbReference type="GO" id="GO:0046961">
    <property type="term" value="F:proton-transporting ATPase activity, rotational mechanism"/>
    <property type="evidence" value="ECO:0007669"/>
    <property type="project" value="TreeGrafter"/>
</dbReference>
<dbReference type="CDD" id="cd06503">
    <property type="entry name" value="ATP-synt_Fo_b"/>
    <property type="match status" value="1"/>
</dbReference>
<dbReference type="HAMAP" id="MF_01398">
    <property type="entry name" value="ATP_synth_b_bprime"/>
    <property type="match status" value="1"/>
</dbReference>
<dbReference type="InterPro" id="IPR002146">
    <property type="entry name" value="ATP_synth_b/b'su_bac/chlpt"/>
</dbReference>
<dbReference type="InterPro" id="IPR050059">
    <property type="entry name" value="ATP_synthase_B_chain"/>
</dbReference>
<dbReference type="NCBIfam" id="NF006612">
    <property type="entry name" value="PRK09174.1"/>
    <property type="match status" value="1"/>
</dbReference>
<dbReference type="PANTHER" id="PTHR33445:SF1">
    <property type="entry name" value="ATP SYNTHASE SUBUNIT B"/>
    <property type="match status" value="1"/>
</dbReference>
<dbReference type="PANTHER" id="PTHR33445">
    <property type="entry name" value="ATP SYNTHASE SUBUNIT B', CHLOROPLASTIC"/>
    <property type="match status" value="1"/>
</dbReference>
<dbReference type="Pfam" id="PF00430">
    <property type="entry name" value="ATP-synt_B"/>
    <property type="match status" value="1"/>
</dbReference>
<gene>
    <name type="primary">atpF2</name>
    <name type="synonym">atpG</name>
    <name type="ordered locus">RHECIAT_CH0000956</name>
</gene>
<sequence>MFFVTPAYAEEAPAAATGTDAHAAPAAGEVHTETGVAEGEHARGPFPPFDSTTYASQLLWLVITFSVFYLLMQKVIAPRIGAILDQRHTRISQDLEEAGRLKAEADAAVQTYEGELAAARAKSNAIGSAARDAAKAKAEEDRRAVEASLSEKIKAAEVRIADIKAKAFADVGTIAEETAAAVVEQLIGGTAAQADVAAAVAAAKKEA</sequence>
<evidence type="ECO:0000250" key="1"/>
<evidence type="ECO:0000255" key="2"/>
<evidence type="ECO:0000305" key="3"/>
<reference key="1">
    <citation type="journal article" date="2010" name="Appl. Environ. Microbiol.">
        <title>Conserved symbiotic plasmid DNA sequences in the multireplicon pangenomic structure of Rhizobium etli.</title>
        <authorList>
            <person name="Gonzalez V."/>
            <person name="Acosta J.L."/>
            <person name="Santamaria R.I."/>
            <person name="Bustos P."/>
            <person name="Fernandez J.L."/>
            <person name="Hernandez Gonzalez I.L."/>
            <person name="Diaz R."/>
            <person name="Flores M."/>
            <person name="Palacios R."/>
            <person name="Mora J."/>
            <person name="Davila G."/>
        </authorList>
    </citation>
    <scope>NUCLEOTIDE SEQUENCE [LARGE SCALE GENOMIC DNA]</scope>
    <source>
        <strain>CIAT 652</strain>
    </source>
</reference>
<name>ATPF2_RHIE6</name>
<protein>
    <recommendedName>
        <fullName>ATP synthase subunit b 2</fullName>
    </recommendedName>
    <alternativeName>
        <fullName>ATP synthase F(0) sector subunit b 2</fullName>
    </alternativeName>
    <alternativeName>
        <fullName>ATPase subunit I 2</fullName>
    </alternativeName>
    <alternativeName>
        <fullName>F-type ATPase subunit b 2</fullName>
        <shortName>F-ATPase subunit b 2</shortName>
    </alternativeName>
</protein>
<accession>B3PRF8</accession>
<feature type="chain" id="PRO_0000369032" description="ATP synthase subunit b 2">
    <location>
        <begin position="1"/>
        <end position="207"/>
    </location>
</feature>
<feature type="transmembrane region" description="Helical" evidence="2">
    <location>
        <begin position="53"/>
        <end position="72"/>
    </location>
</feature>
<keyword id="KW-0066">ATP synthesis</keyword>
<keyword id="KW-0997">Cell inner membrane</keyword>
<keyword id="KW-1003">Cell membrane</keyword>
<keyword id="KW-0138">CF(0)</keyword>
<keyword id="KW-0375">Hydrogen ion transport</keyword>
<keyword id="KW-0406">Ion transport</keyword>
<keyword id="KW-0472">Membrane</keyword>
<keyword id="KW-0812">Transmembrane</keyword>
<keyword id="KW-1133">Transmembrane helix</keyword>
<keyword id="KW-0813">Transport</keyword>
<proteinExistence type="inferred from homology"/>
<comment type="function">
    <text evidence="1">F(1)F(0) ATP synthase produces ATP from ADP in the presence of a proton or sodium gradient. F-type ATPases consist of two structural domains, F(1) containing the extramembraneous catalytic core and F(0) containing the membrane proton channel, linked together by a central stalk and a peripheral stalk. During catalysis, ATP synthesis in the catalytic domain of F(1) is coupled via a rotary mechanism of the central stalk subunits to proton translocation (By similarity).</text>
</comment>
<comment type="function">
    <text evidence="1">Component of the F(0) channel, it forms part of the peripheral stalk, linking F(1) to F(0). The b'-subunit is a diverged and duplicated form of b found in plants and photosynthetic bacteria (By similarity).</text>
</comment>
<comment type="subunit">
    <text evidence="1">F-type ATPases have 2 components, F(1) - the catalytic core - and F(0) - the membrane proton channel. F(1) has five subunits: alpha(3), beta(3), gamma(1), delta(1), epsilon(1). F(0) has three main subunits: a(1), b(2) and c(10-14). The alpha and beta chains form an alternating ring which encloses part of the gamma chain. F(1) is attached to F(0) by a central stalk formed by the gamma and epsilon chains, while a peripheral stalk is formed by the delta and b chains (By similarity).</text>
</comment>
<comment type="subcellular location">
    <subcellularLocation>
        <location evidence="1">Cell inner membrane</location>
        <topology evidence="1">Single-pass membrane protein</topology>
    </subcellularLocation>
</comment>
<comment type="similarity">
    <text evidence="3">Belongs to the ATPase B chain family.</text>
</comment>
<organism>
    <name type="scientific">Rhizobium etli (strain CIAT 652)</name>
    <dbReference type="NCBI Taxonomy" id="491916"/>
    <lineage>
        <taxon>Bacteria</taxon>
        <taxon>Pseudomonadati</taxon>
        <taxon>Pseudomonadota</taxon>
        <taxon>Alphaproteobacteria</taxon>
        <taxon>Hyphomicrobiales</taxon>
        <taxon>Rhizobiaceae</taxon>
        <taxon>Rhizobium/Agrobacterium group</taxon>
        <taxon>Rhizobium</taxon>
    </lineage>
</organism>